<dbReference type="EMBL" id="BC146138">
    <property type="protein sequence ID" value="AAI46139.1"/>
    <property type="molecule type" value="mRNA"/>
</dbReference>
<dbReference type="RefSeq" id="NP_001092596.1">
    <property type="nucleotide sequence ID" value="NM_001099126.2"/>
</dbReference>
<dbReference type="FunCoup" id="A6H773">
    <property type="interactions" value="897"/>
</dbReference>
<dbReference type="STRING" id="9913.ENSBTAP00000017169"/>
<dbReference type="PaxDb" id="9913-ENSBTAP00000017169"/>
<dbReference type="GeneID" id="613774"/>
<dbReference type="KEGG" id="bta:613774"/>
<dbReference type="CTD" id="54968"/>
<dbReference type="eggNOG" id="KOG4478">
    <property type="taxonomic scope" value="Eukaryota"/>
</dbReference>
<dbReference type="HOGENOM" id="CLU_096509_1_0_1"/>
<dbReference type="InParanoid" id="A6H773"/>
<dbReference type="OrthoDB" id="156886at2759"/>
<dbReference type="TreeFam" id="TF314656"/>
<dbReference type="Proteomes" id="UP000009136">
    <property type="component" value="Unplaced"/>
</dbReference>
<dbReference type="GO" id="GO:0005743">
    <property type="term" value="C:mitochondrial inner membrane"/>
    <property type="evidence" value="ECO:0000250"/>
    <property type="project" value="UniProtKB"/>
</dbReference>
<dbReference type="GO" id="GO:0031966">
    <property type="term" value="C:mitochondrial membrane"/>
    <property type="evidence" value="ECO:0000250"/>
    <property type="project" value="UniProtKB"/>
</dbReference>
<dbReference type="GO" id="GO:0140260">
    <property type="term" value="F:mitochondrial proton-transporting ATP synthase complex binding"/>
    <property type="evidence" value="ECO:0000250"/>
    <property type="project" value="UniProtKB"/>
</dbReference>
<dbReference type="GO" id="GO:0033615">
    <property type="term" value="P:mitochondrial proton-transporting ATP synthase complex assembly"/>
    <property type="evidence" value="ECO:0000250"/>
    <property type="project" value="UniProtKB"/>
</dbReference>
<dbReference type="GO" id="GO:0051259">
    <property type="term" value="P:protein complex oligomerization"/>
    <property type="evidence" value="ECO:0000250"/>
    <property type="project" value="UniProtKB"/>
</dbReference>
<dbReference type="InterPro" id="IPR009724">
    <property type="entry name" value="TMEM70"/>
</dbReference>
<dbReference type="InterPro" id="IPR045325">
    <property type="entry name" value="TMEM70/TMEM186/TMEM223"/>
</dbReference>
<dbReference type="PANTHER" id="PTHR13281">
    <property type="entry name" value="TRANSMEMBRANE PROTEIN 70, MITOCHONDRIAL"/>
    <property type="match status" value="1"/>
</dbReference>
<dbReference type="PANTHER" id="PTHR13281:SF0">
    <property type="entry name" value="TRANSMEMBRANE PROTEIN 70, MITOCHONDRIAL"/>
    <property type="match status" value="1"/>
</dbReference>
<dbReference type="Pfam" id="PF06979">
    <property type="entry name" value="TMEM70"/>
    <property type="match status" value="1"/>
</dbReference>
<organism>
    <name type="scientific">Bos taurus</name>
    <name type="common">Bovine</name>
    <dbReference type="NCBI Taxonomy" id="9913"/>
    <lineage>
        <taxon>Eukaryota</taxon>
        <taxon>Metazoa</taxon>
        <taxon>Chordata</taxon>
        <taxon>Craniata</taxon>
        <taxon>Vertebrata</taxon>
        <taxon>Euteleostomi</taxon>
        <taxon>Mammalia</taxon>
        <taxon>Eutheria</taxon>
        <taxon>Laurasiatheria</taxon>
        <taxon>Artiodactyla</taxon>
        <taxon>Ruminantia</taxon>
        <taxon>Pecora</taxon>
        <taxon>Bovidae</taxon>
        <taxon>Bovinae</taxon>
        <taxon>Bos</taxon>
    </lineage>
</organism>
<accession>A6H773</accession>
<evidence type="ECO:0000250" key="1">
    <source>
        <dbReference type="UniProtKB" id="Q9BUB7"/>
    </source>
</evidence>
<evidence type="ECO:0000255" key="2"/>
<evidence type="ECO:0000305" key="3"/>
<feature type="transit peptide" description="Mitochondrion" evidence="2">
    <location>
        <begin position="1"/>
        <end position="78"/>
    </location>
</feature>
<feature type="chain" id="PRO_0000361546" description="Transmembrane protein 70, mitochondrial">
    <location>
        <begin position="79"/>
        <end position="254"/>
    </location>
</feature>
<feature type="topological domain" description="Mitochondrial matrix" evidence="1">
    <location>
        <begin position="79"/>
        <end position="112"/>
    </location>
</feature>
<feature type="transmembrane region" description="Helical" evidence="2">
    <location>
        <begin position="113"/>
        <end position="133"/>
    </location>
</feature>
<feature type="topological domain" description="Mitochondrial intermembrane" evidence="1">
    <location>
        <begin position="134"/>
        <end position="136"/>
    </location>
</feature>
<feature type="transmembrane region" description="Helical" evidence="2">
    <location>
        <begin position="137"/>
        <end position="157"/>
    </location>
</feature>
<feature type="topological domain" description="Mitochondrial matrix" evidence="1">
    <location>
        <begin position="158"/>
        <end position="254"/>
    </location>
</feature>
<comment type="function">
    <text evidence="1">Scaffold protein that participates in the c-ring assembly of mitochondrial ATP synthase (F(1)F(0) ATP synthase or complex V) by facilitating the membrane insertion and oligomer formation of the subunit c/ATP5MC1 through its interaction. Therefore, participates in the early stage of mitochondrial ATP synthase biogenesis and also protects subunit c/ATP5MC1 against intramitochondrial proteolysis. In addition, binds the mitochondrial proton-transporting ATP synthase complexes I and may play a role in the stability of its membrane-bound subassemblies.</text>
</comment>
<comment type="subunit">
    <text evidence="1">Homooligomer. Interacts (homooligomer form) with ATP5MC1; this interaction facilitates the oligomer formation of subunit c/ATP5MC1 (c-ring) and the c-ring membrane insertion and also protects ATP5MC1 against intramitochondrial proteolysis. Interacts with the core subunits TMEM126B, NDUFAF1, ECSIT and ACAD9 of the MCIA complex. Interacts with ATP5MC3, TMEM242 and TIMMDC1.</text>
</comment>
<comment type="subcellular location">
    <subcellularLocation>
        <location evidence="1">Mitochondrion inner membrane</location>
        <topology evidence="1">Multi-pass membrane protein</topology>
    </subcellularLocation>
    <text evidence="1">Mostly located within the inner cristae membrane.</text>
</comment>
<comment type="similarity">
    <text evidence="3">Belongs to the TMEM70 family.</text>
</comment>
<proteinExistence type="evidence at transcript level"/>
<protein>
    <recommendedName>
        <fullName evidence="1">Transmembrane protein 70, mitochondrial</fullName>
    </recommendedName>
</protein>
<gene>
    <name evidence="1" type="primary">TMEM70</name>
</gene>
<sequence length="254" mass="28139">MLFLALGGPWAAGLRLSGKRTALWASSALRDPRAAVSRAASCRGSSGRVGGTGLSAAAPVLRRVRAQIPVCWERGVRCSHTQLDKSEDGRLIYTGNLARTVFGVKCFSYSTSLISLAFLPYIFAQNNVIFGSLPLQILFYGTIGSFTVITPALLHFLTKGYVIRLYHEARTDTYKAITYSVVLSEKSTVFHQNDVKIPNSTHVFTTFYAKTKSLLVNPALFPNPEDYNHLMGYDKPFTFDLEEASEKKQLKEEK</sequence>
<reference key="1">
    <citation type="submission" date="2007-06" db="EMBL/GenBank/DDBJ databases">
        <authorList>
            <consortium name="NIH - Mammalian Gene Collection (MGC) project"/>
        </authorList>
    </citation>
    <scope>NUCLEOTIDE SEQUENCE [LARGE SCALE MRNA]</scope>
    <source>
        <strain>Hereford</strain>
        <tissue>Fetal cerebellum</tissue>
    </source>
</reference>
<name>TMM70_BOVIN</name>
<keyword id="KW-0472">Membrane</keyword>
<keyword id="KW-0496">Mitochondrion</keyword>
<keyword id="KW-0999">Mitochondrion inner membrane</keyword>
<keyword id="KW-1185">Reference proteome</keyword>
<keyword id="KW-0809">Transit peptide</keyword>
<keyword id="KW-0812">Transmembrane</keyword>
<keyword id="KW-1133">Transmembrane helix</keyword>